<feature type="chain" id="PRO_0000185345" description="Putative [LysW]-lysine/[LysW]-ornithine hydrolase">
    <location>
        <begin position="1"/>
        <end position="337"/>
    </location>
</feature>
<feature type="active site" evidence="1">
    <location>
        <position position="69"/>
    </location>
</feature>
<feature type="active site" description="Proton acceptor" evidence="1">
    <location>
        <position position="118"/>
    </location>
</feature>
<feature type="binding site" evidence="1">
    <location>
        <position position="67"/>
    </location>
    <ligand>
        <name>Zn(2+)</name>
        <dbReference type="ChEBI" id="CHEBI:29105"/>
        <label>1</label>
    </ligand>
</feature>
<feature type="binding site" evidence="1">
    <location>
        <position position="91"/>
    </location>
    <ligand>
        <name>Zn(2+)</name>
        <dbReference type="ChEBI" id="CHEBI:29105"/>
        <label>1</label>
    </ligand>
</feature>
<feature type="binding site" evidence="1">
    <location>
        <position position="91"/>
    </location>
    <ligand>
        <name>Zn(2+)</name>
        <dbReference type="ChEBI" id="CHEBI:29105"/>
        <label>2</label>
    </ligand>
</feature>
<feature type="binding site" evidence="1">
    <location>
        <position position="119"/>
    </location>
    <ligand>
        <name>Zn(2+)</name>
        <dbReference type="ChEBI" id="CHEBI:29105"/>
        <label>2</label>
    </ligand>
</feature>
<feature type="binding site" evidence="1">
    <location>
        <position position="140"/>
    </location>
    <ligand>
        <name>Zn(2+)</name>
        <dbReference type="ChEBI" id="CHEBI:29105"/>
        <label>1</label>
    </ligand>
</feature>
<feature type="binding site" evidence="1">
    <location>
        <position position="298"/>
    </location>
    <ligand>
        <name>Zn(2+)</name>
        <dbReference type="ChEBI" id="CHEBI:29105"/>
        <label>2</label>
    </ligand>
</feature>
<dbReference type="EC" id="3.5.1.130" evidence="1"/>
<dbReference type="EC" id="3.5.1.132" evidence="1"/>
<dbReference type="EMBL" id="AJ248284">
    <property type="protein sequence ID" value="CAB49366.1"/>
    <property type="molecule type" value="Genomic_DNA"/>
</dbReference>
<dbReference type="EMBL" id="HE613800">
    <property type="protein sequence ID" value="CCE69826.1"/>
    <property type="molecule type" value="Genomic_DNA"/>
</dbReference>
<dbReference type="PIR" id="G75160">
    <property type="entry name" value="G75160"/>
</dbReference>
<dbReference type="RefSeq" id="WP_010867567.1">
    <property type="nucleotide sequence ID" value="NC_000868.1"/>
</dbReference>
<dbReference type="SMR" id="Q9V1I3"/>
<dbReference type="STRING" id="272844.PAB0294"/>
<dbReference type="KEGG" id="pab:PAB0294"/>
<dbReference type="PATRIC" id="fig|272844.11.peg.470"/>
<dbReference type="eggNOG" id="arCOG01107">
    <property type="taxonomic scope" value="Archaea"/>
</dbReference>
<dbReference type="HOGENOM" id="CLU_021802_2_0_2"/>
<dbReference type="OrthoDB" id="24854at2157"/>
<dbReference type="PhylomeDB" id="Q9V1I3"/>
<dbReference type="UniPathway" id="UPA00033">
    <property type="reaction ID" value="UER00039"/>
</dbReference>
<dbReference type="UniPathway" id="UPA00068"/>
<dbReference type="Proteomes" id="UP000000810">
    <property type="component" value="Chromosome"/>
</dbReference>
<dbReference type="Proteomes" id="UP000009139">
    <property type="component" value="Chromosome"/>
</dbReference>
<dbReference type="GO" id="GO:0005737">
    <property type="term" value="C:cytoplasm"/>
    <property type="evidence" value="ECO:0007669"/>
    <property type="project" value="UniProtKB-SubCell"/>
</dbReference>
<dbReference type="GO" id="GO:0050897">
    <property type="term" value="F:cobalt ion binding"/>
    <property type="evidence" value="ECO:0007669"/>
    <property type="project" value="UniProtKB-UniRule"/>
</dbReference>
<dbReference type="GO" id="GO:0016811">
    <property type="term" value="F:hydrolase activity, acting on carbon-nitrogen (but not peptide) bonds, in linear amides"/>
    <property type="evidence" value="ECO:0007669"/>
    <property type="project" value="UniProtKB-UniRule"/>
</dbReference>
<dbReference type="GO" id="GO:0008270">
    <property type="term" value="F:zinc ion binding"/>
    <property type="evidence" value="ECO:0007669"/>
    <property type="project" value="UniProtKB-UniRule"/>
</dbReference>
<dbReference type="GO" id="GO:0042450">
    <property type="term" value="P:arginine biosynthetic process via ornithine"/>
    <property type="evidence" value="ECO:0007669"/>
    <property type="project" value="UniProtKB-UniRule"/>
</dbReference>
<dbReference type="GO" id="GO:0006526">
    <property type="term" value="P:L-arginine biosynthetic process"/>
    <property type="evidence" value="ECO:0007669"/>
    <property type="project" value="UniProtKB-UniPathway"/>
</dbReference>
<dbReference type="GO" id="GO:0019878">
    <property type="term" value="P:lysine biosynthetic process via aminoadipic acid"/>
    <property type="evidence" value="ECO:0007669"/>
    <property type="project" value="UniProtKB-UniRule"/>
</dbReference>
<dbReference type="Gene3D" id="3.40.630.10">
    <property type="entry name" value="Zn peptidases"/>
    <property type="match status" value="2"/>
</dbReference>
<dbReference type="HAMAP" id="MF_01120">
    <property type="entry name" value="LysK"/>
    <property type="match status" value="1"/>
</dbReference>
<dbReference type="InterPro" id="IPR001261">
    <property type="entry name" value="ArgE/DapE_CS"/>
</dbReference>
<dbReference type="InterPro" id="IPR010175">
    <property type="entry name" value="LysK"/>
</dbReference>
<dbReference type="InterPro" id="IPR002933">
    <property type="entry name" value="Peptidase_M20"/>
</dbReference>
<dbReference type="InterPro" id="IPR050072">
    <property type="entry name" value="Peptidase_M20A"/>
</dbReference>
<dbReference type="InterPro" id="IPR008007">
    <property type="entry name" value="Peptidase_M42"/>
</dbReference>
<dbReference type="NCBIfam" id="TIGR01902">
    <property type="entry name" value="dapE-lys-deAc"/>
    <property type="match status" value="1"/>
</dbReference>
<dbReference type="NCBIfam" id="NF003367">
    <property type="entry name" value="PRK04443.1"/>
    <property type="match status" value="1"/>
</dbReference>
<dbReference type="PANTHER" id="PTHR43808:SF28">
    <property type="entry name" value="[LYSW]-LYSINE_[LYSW]-ORNITHINE HYDROLASE"/>
    <property type="match status" value="1"/>
</dbReference>
<dbReference type="PANTHER" id="PTHR43808">
    <property type="entry name" value="ACETYLORNITHINE DEACETYLASE"/>
    <property type="match status" value="1"/>
</dbReference>
<dbReference type="Pfam" id="PF01546">
    <property type="entry name" value="Peptidase_M20"/>
    <property type="match status" value="1"/>
</dbReference>
<dbReference type="PIRSF" id="PIRSF001123">
    <property type="entry name" value="PepA_GA"/>
    <property type="match status" value="1"/>
</dbReference>
<dbReference type="SUPFAM" id="SSF53187">
    <property type="entry name" value="Zn-dependent exopeptidases"/>
    <property type="match status" value="1"/>
</dbReference>
<dbReference type="PROSITE" id="PS00758">
    <property type="entry name" value="ARGE_DAPE_CPG2_1"/>
    <property type="match status" value="1"/>
</dbReference>
<name>LYSK_PYRAB</name>
<keyword id="KW-0028">Amino-acid biosynthesis</keyword>
<keyword id="KW-0055">Arginine biosynthesis</keyword>
<keyword id="KW-0170">Cobalt</keyword>
<keyword id="KW-0963">Cytoplasm</keyword>
<keyword id="KW-0378">Hydrolase</keyword>
<keyword id="KW-0457">Lysine biosynthesis</keyword>
<keyword id="KW-0479">Metal-binding</keyword>
<keyword id="KW-0862">Zinc</keyword>
<evidence type="ECO:0000255" key="1">
    <source>
        <dbReference type="HAMAP-Rule" id="MF_01120"/>
    </source>
</evidence>
<organism>
    <name type="scientific">Pyrococcus abyssi (strain GE5 / Orsay)</name>
    <dbReference type="NCBI Taxonomy" id="272844"/>
    <lineage>
        <taxon>Archaea</taxon>
        <taxon>Methanobacteriati</taxon>
        <taxon>Methanobacteriota</taxon>
        <taxon>Thermococci</taxon>
        <taxon>Thermococcales</taxon>
        <taxon>Thermococcaceae</taxon>
        <taxon>Pyrococcus</taxon>
    </lineage>
</organism>
<sequence>MEIPKDEKIKFLKELVEIYSPTGKEEEAAKFIKEKLEEYGVKAYIDKVGNVIGVKEGEGPLILLAGHVDTVPGYIPVRIEGDILWGRGSVDAKGPLSALLFAMVESNANVIFAGLVDEEGFSKGARALDVPRPEYVIVGEPSGVNGVTIGYKGSLTVRFVERVEKFHGSIGGGAAEKLIERWLSISGNFEDGFNGLSGRIVRFVAYERDFEFYGEMIVNLRTPPGYEPPRDWDIIDFVPAYEVNRRSPLVRTFVRSIRELGMKPKLKKKSGTADMNILAPRFGVDAVAYGPGDSRLDHTPYERISLMEYLQSIDVLKNVLTKLKGKDLDKIYKSSPR</sequence>
<proteinExistence type="inferred from homology"/>
<gene>
    <name evidence="1" type="primary">lysK</name>
    <name type="ordered locus">PYRAB04440</name>
    <name type="ORF">PAB0294</name>
</gene>
<accession>Q9V1I3</accession>
<accession>G8ZGE7</accession>
<protein>
    <recommendedName>
        <fullName evidence="1">Putative [LysW]-lysine/[LysW]-ornithine hydrolase</fullName>
        <ecNumber evidence="1">3.5.1.130</ecNumber>
        <ecNumber evidence="1">3.5.1.132</ecNumber>
    </recommendedName>
</protein>
<reference key="1">
    <citation type="journal article" date="2003" name="Mol. Microbiol.">
        <title>An integrated analysis of the genome of the hyperthermophilic archaeon Pyrococcus abyssi.</title>
        <authorList>
            <person name="Cohen G.N."/>
            <person name="Barbe V."/>
            <person name="Flament D."/>
            <person name="Galperin M."/>
            <person name="Heilig R."/>
            <person name="Lecompte O."/>
            <person name="Poch O."/>
            <person name="Prieur D."/>
            <person name="Querellou J."/>
            <person name="Ripp R."/>
            <person name="Thierry J.-C."/>
            <person name="Van der Oost J."/>
            <person name="Weissenbach J."/>
            <person name="Zivanovic Y."/>
            <person name="Forterre P."/>
        </authorList>
    </citation>
    <scope>NUCLEOTIDE SEQUENCE [LARGE SCALE GENOMIC DNA]</scope>
    <source>
        <strain>GE5 / Orsay</strain>
    </source>
</reference>
<reference key="2">
    <citation type="journal article" date="2012" name="Curr. Microbiol.">
        <title>Re-annotation of two hyperthermophilic archaea Pyrococcus abyssi GE5 and Pyrococcus furiosus DSM 3638.</title>
        <authorList>
            <person name="Gao J."/>
            <person name="Wang J."/>
        </authorList>
    </citation>
    <scope>GENOME REANNOTATION</scope>
    <source>
        <strain>GE5 / Orsay</strain>
    </source>
</reference>
<comment type="function">
    <text evidence="1">Catalyzes the release of L-lysine from [LysW]-gamma-L-lysine and the release of L-ornithine from [LysW]-L-ornithine.</text>
</comment>
<comment type="catalytic activity">
    <reaction evidence="1">
        <text>[amino-group carrier protein]-C-terminal-gamma-(L-lysyl)-L-glutamate + H2O = [amino-group carrier protein]-C-terminal-L-glutamate + L-lysine</text>
        <dbReference type="Rhea" id="RHEA:48684"/>
        <dbReference type="Rhea" id="RHEA-COMP:9693"/>
        <dbReference type="Rhea" id="RHEA-COMP:9715"/>
        <dbReference type="ChEBI" id="CHEBI:15377"/>
        <dbReference type="ChEBI" id="CHEBI:32551"/>
        <dbReference type="ChEBI" id="CHEBI:78525"/>
        <dbReference type="ChEBI" id="CHEBI:78526"/>
        <dbReference type="EC" id="3.5.1.130"/>
    </reaction>
</comment>
<comment type="catalytic activity">
    <reaction evidence="1">
        <text>[amino-group carrier protein]-C-terminal-gamma-(L-ornithyl)-L-glutamate + H2O = [amino-group carrier protein]-C-terminal-L-glutamate + L-ornithine</text>
        <dbReference type="Rhea" id="RHEA:52676"/>
        <dbReference type="Rhea" id="RHEA-COMP:9693"/>
        <dbReference type="Rhea" id="RHEA-COMP:13328"/>
        <dbReference type="ChEBI" id="CHEBI:15377"/>
        <dbReference type="ChEBI" id="CHEBI:46911"/>
        <dbReference type="ChEBI" id="CHEBI:78525"/>
        <dbReference type="ChEBI" id="CHEBI:136763"/>
        <dbReference type="EC" id="3.5.1.132"/>
    </reaction>
</comment>
<comment type="cofactor">
    <cofactor evidence="1">
        <name>Zn(2+)</name>
        <dbReference type="ChEBI" id="CHEBI:29105"/>
    </cofactor>
    <cofactor evidence="1">
        <name>Co(2+)</name>
        <dbReference type="ChEBI" id="CHEBI:48828"/>
    </cofactor>
    <text evidence="1">Binds 2 Zn(2+) or Co(2+) ions per subunit.</text>
</comment>
<comment type="pathway">
    <text evidence="1">Amino-acid biosynthesis; L-lysine biosynthesis via AAA pathway; L-lysine from L-alpha-aminoadipate (Thermus route): step 5/5.</text>
</comment>
<comment type="pathway">
    <text evidence="1">Amino-acid biosynthesis; L-arginine biosynthesis.</text>
</comment>
<comment type="subcellular location">
    <subcellularLocation>
        <location evidence="1">Cytoplasm</location>
    </subcellularLocation>
</comment>
<comment type="similarity">
    <text evidence="1">Belongs to the peptidase M20A family. LysK subfamily.</text>
</comment>